<feature type="chain" id="PRO_0000334887" description="Ribonuclease HII">
    <location>
        <begin position="1"/>
        <end position="254"/>
    </location>
</feature>
<feature type="domain" description="RNase H type-2" evidence="2">
    <location>
        <begin position="70"/>
        <end position="254"/>
    </location>
</feature>
<feature type="binding site" evidence="1">
    <location>
        <position position="76"/>
    </location>
    <ligand>
        <name>a divalent metal cation</name>
        <dbReference type="ChEBI" id="CHEBI:60240"/>
    </ligand>
</feature>
<feature type="binding site" evidence="1">
    <location>
        <position position="77"/>
    </location>
    <ligand>
        <name>a divalent metal cation</name>
        <dbReference type="ChEBI" id="CHEBI:60240"/>
    </ligand>
</feature>
<feature type="binding site" evidence="1">
    <location>
        <position position="168"/>
    </location>
    <ligand>
        <name>a divalent metal cation</name>
        <dbReference type="ChEBI" id="CHEBI:60240"/>
    </ligand>
</feature>
<comment type="function">
    <text evidence="1">Endonuclease that specifically degrades the RNA of RNA-DNA hybrids.</text>
</comment>
<comment type="catalytic activity">
    <reaction evidence="1">
        <text>Endonucleolytic cleavage to 5'-phosphomonoester.</text>
        <dbReference type="EC" id="3.1.26.4"/>
    </reaction>
</comment>
<comment type="cofactor">
    <cofactor evidence="1">
        <name>Mn(2+)</name>
        <dbReference type="ChEBI" id="CHEBI:29035"/>
    </cofactor>
    <cofactor evidence="1">
        <name>Mg(2+)</name>
        <dbReference type="ChEBI" id="CHEBI:18420"/>
    </cofactor>
    <text evidence="1">Manganese or magnesium. Binds 1 divalent metal ion per monomer in the absence of substrate. May bind a second metal ion after substrate binding.</text>
</comment>
<comment type="subcellular location">
    <subcellularLocation>
        <location evidence="1">Cytoplasm</location>
    </subcellularLocation>
</comment>
<comment type="similarity">
    <text evidence="1">Belongs to the RNase HII family.</text>
</comment>
<dbReference type="EC" id="3.1.26.4" evidence="1"/>
<dbReference type="EMBL" id="CP000885">
    <property type="protein sequence ID" value="ABX42761.1"/>
    <property type="molecule type" value="Genomic_DNA"/>
</dbReference>
<dbReference type="RefSeq" id="WP_012200415.1">
    <property type="nucleotide sequence ID" value="NC_010001.1"/>
</dbReference>
<dbReference type="SMR" id="A9KLL7"/>
<dbReference type="STRING" id="357809.Cphy_2400"/>
<dbReference type="KEGG" id="cpy:Cphy_2400"/>
<dbReference type="eggNOG" id="COG0164">
    <property type="taxonomic scope" value="Bacteria"/>
</dbReference>
<dbReference type="HOGENOM" id="CLU_036532_2_1_9"/>
<dbReference type="OrthoDB" id="9803420at2"/>
<dbReference type="Proteomes" id="UP000000370">
    <property type="component" value="Chromosome"/>
</dbReference>
<dbReference type="GO" id="GO:0005737">
    <property type="term" value="C:cytoplasm"/>
    <property type="evidence" value="ECO:0007669"/>
    <property type="project" value="UniProtKB-SubCell"/>
</dbReference>
<dbReference type="GO" id="GO:0032299">
    <property type="term" value="C:ribonuclease H2 complex"/>
    <property type="evidence" value="ECO:0007669"/>
    <property type="project" value="TreeGrafter"/>
</dbReference>
<dbReference type="GO" id="GO:0030145">
    <property type="term" value="F:manganese ion binding"/>
    <property type="evidence" value="ECO:0007669"/>
    <property type="project" value="UniProtKB-UniRule"/>
</dbReference>
<dbReference type="GO" id="GO:0003723">
    <property type="term" value="F:RNA binding"/>
    <property type="evidence" value="ECO:0007669"/>
    <property type="project" value="InterPro"/>
</dbReference>
<dbReference type="GO" id="GO:0004523">
    <property type="term" value="F:RNA-DNA hybrid ribonuclease activity"/>
    <property type="evidence" value="ECO:0007669"/>
    <property type="project" value="UniProtKB-UniRule"/>
</dbReference>
<dbReference type="GO" id="GO:0043137">
    <property type="term" value="P:DNA replication, removal of RNA primer"/>
    <property type="evidence" value="ECO:0007669"/>
    <property type="project" value="TreeGrafter"/>
</dbReference>
<dbReference type="GO" id="GO:0006298">
    <property type="term" value="P:mismatch repair"/>
    <property type="evidence" value="ECO:0007669"/>
    <property type="project" value="TreeGrafter"/>
</dbReference>
<dbReference type="CDD" id="cd07182">
    <property type="entry name" value="RNase_HII_bacteria_HII_like"/>
    <property type="match status" value="1"/>
</dbReference>
<dbReference type="FunFam" id="3.30.420.10:FF:000006">
    <property type="entry name" value="Ribonuclease HII"/>
    <property type="match status" value="1"/>
</dbReference>
<dbReference type="Gene3D" id="3.30.420.10">
    <property type="entry name" value="Ribonuclease H-like superfamily/Ribonuclease H"/>
    <property type="match status" value="1"/>
</dbReference>
<dbReference type="HAMAP" id="MF_00052_B">
    <property type="entry name" value="RNase_HII_B"/>
    <property type="match status" value="1"/>
</dbReference>
<dbReference type="InterPro" id="IPR022898">
    <property type="entry name" value="RNase_HII"/>
</dbReference>
<dbReference type="InterPro" id="IPR001352">
    <property type="entry name" value="RNase_HII/HIII"/>
</dbReference>
<dbReference type="InterPro" id="IPR024567">
    <property type="entry name" value="RNase_HII/HIII_dom"/>
</dbReference>
<dbReference type="InterPro" id="IPR012337">
    <property type="entry name" value="RNaseH-like_sf"/>
</dbReference>
<dbReference type="InterPro" id="IPR036397">
    <property type="entry name" value="RNaseH_sf"/>
</dbReference>
<dbReference type="NCBIfam" id="NF000594">
    <property type="entry name" value="PRK00015.1-1"/>
    <property type="match status" value="1"/>
</dbReference>
<dbReference type="NCBIfam" id="NF000595">
    <property type="entry name" value="PRK00015.1-3"/>
    <property type="match status" value="1"/>
</dbReference>
<dbReference type="PANTHER" id="PTHR10954">
    <property type="entry name" value="RIBONUCLEASE H2 SUBUNIT A"/>
    <property type="match status" value="1"/>
</dbReference>
<dbReference type="PANTHER" id="PTHR10954:SF18">
    <property type="entry name" value="RIBONUCLEASE HII"/>
    <property type="match status" value="1"/>
</dbReference>
<dbReference type="Pfam" id="PF01351">
    <property type="entry name" value="RNase_HII"/>
    <property type="match status" value="1"/>
</dbReference>
<dbReference type="SUPFAM" id="SSF53098">
    <property type="entry name" value="Ribonuclease H-like"/>
    <property type="match status" value="1"/>
</dbReference>
<dbReference type="PROSITE" id="PS51975">
    <property type="entry name" value="RNASE_H_2"/>
    <property type="match status" value="1"/>
</dbReference>
<proteinExistence type="inferred from homology"/>
<evidence type="ECO:0000255" key="1">
    <source>
        <dbReference type="HAMAP-Rule" id="MF_00052"/>
    </source>
</evidence>
<evidence type="ECO:0000255" key="2">
    <source>
        <dbReference type="PROSITE-ProRule" id="PRU01319"/>
    </source>
</evidence>
<reference key="1">
    <citation type="submission" date="2007-11" db="EMBL/GenBank/DDBJ databases">
        <title>Complete genome sequence of Clostridium phytofermentans ISDg.</title>
        <authorList>
            <person name="Leschine S.B."/>
            <person name="Warnick T.A."/>
            <person name="Blanchard J.L."/>
            <person name="Schnell D.J."/>
            <person name="Petit E.L."/>
            <person name="LaTouf W.G."/>
            <person name="Copeland A."/>
            <person name="Lucas S."/>
            <person name="Lapidus A."/>
            <person name="Barry K."/>
            <person name="Glavina del Rio T."/>
            <person name="Dalin E."/>
            <person name="Tice H."/>
            <person name="Pitluck S."/>
            <person name="Kiss H."/>
            <person name="Brettin T."/>
            <person name="Bruce D."/>
            <person name="Detter J.C."/>
            <person name="Han C."/>
            <person name="Kuske C."/>
            <person name="Schmutz J."/>
            <person name="Larimer F."/>
            <person name="Land M."/>
            <person name="Hauser L."/>
            <person name="Kyrpides N."/>
            <person name="Kim E.A."/>
            <person name="Richardson P."/>
        </authorList>
    </citation>
    <scope>NUCLEOTIDE SEQUENCE [LARGE SCALE GENOMIC DNA]</scope>
    <source>
        <strain>ATCC 700394 / DSM 18823 / ISDg</strain>
    </source>
</reference>
<organism>
    <name type="scientific">Lachnoclostridium phytofermentans (strain ATCC 700394 / DSM 18823 / ISDg)</name>
    <name type="common">Clostridium phytofermentans</name>
    <dbReference type="NCBI Taxonomy" id="357809"/>
    <lineage>
        <taxon>Bacteria</taxon>
        <taxon>Bacillati</taxon>
        <taxon>Bacillota</taxon>
        <taxon>Clostridia</taxon>
        <taxon>Lachnospirales</taxon>
        <taxon>Lachnospiraceae</taxon>
    </lineage>
</organism>
<protein>
    <recommendedName>
        <fullName evidence="1">Ribonuclease HII</fullName>
        <shortName evidence="1">RNase HII</shortName>
        <ecNumber evidence="1">3.1.26.4</ecNumber>
    </recommendedName>
</protein>
<sequence length="254" mass="28149">MNIKISEITKELELVGEGGFFGVKDKYGTDEREGVKKLLFKYENRYEKLNAERARVRFLQEYELSYPDYRYICGIDEVGRGPLAGPVIACAVILPKDCEILYINDSKQLSEKKREALYDEIMEKAISVGIGSASHARIEEINILQATYEAMRGAINKLGVVPELLLNDAVTIPKVVIPQVPIIKGDAKSISIAAASIVAKVTRDRLMVEYDTVFPGYGFASNKGYGSADHIKALKELGPSPIHRASFIKNLTSC</sequence>
<accession>A9KLL7</accession>
<name>RNH2_LACP7</name>
<keyword id="KW-0963">Cytoplasm</keyword>
<keyword id="KW-0255">Endonuclease</keyword>
<keyword id="KW-0378">Hydrolase</keyword>
<keyword id="KW-0464">Manganese</keyword>
<keyword id="KW-0479">Metal-binding</keyword>
<keyword id="KW-0540">Nuclease</keyword>
<keyword id="KW-1185">Reference proteome</keyword>
<gene>
    <name evidence="1" type="primary">rnhB</name>
    <name type="ordered locus">Cphy_2400</name>
</gene>